<evidence type="ECO:0000250" key="1"/>
<evidence type="ECO:0000250" key="2">
    <source>
        <dbReference type="UniProtKB" id="P29558"/>
    </source>
</evidence>
<evidence type="ECO:0000255" key="3">
    <source>
        <dbReference type="PROSITE-ProRule" id="PRU00176"/>
    </source>
</evidence>
<evidence type="ECO:0000256" key="4">
    <source>
        <dbReference type="SAM" id="MobiDB-lite"/>
    </source>
</evidence>
<evidence type="ECO:0000269" key="5">
    <source>
    </source>
</evidence>
<evidence type="ECO:0000303" key="6">
    <source>
    </source>
</evidence>
<evidence type="ECO:0000303" key="7">
    <source>
    </source>
</evidence>
<evidence type="ECO:0000305" key="8"/>
<sequence>MGKVWKQQMYPQYATYYYPQYLQAKQSLVPAHPMAPPSPSTTSSNNNSSSSSNSGWDQLSKTNLYIRGLPPNTTDQDLVKLCQPYGKIVSTKAILDKATNKCKGYGFVDFDSPAAAQKAVSALKANGVQAQMAKQQEQDPTNLYISNLPLSMDEQELENMLKPFGQVISTRVLRDSSGASRGVGFARMESTEKCEAVIGHFNGKFIKTPPGVSAPTEPLLCKFADGGQKKRQNPNKYIPNGRPWPRDGEAGMTLTYDPTTAALHNGFYPSPYSIATNRMITQTSLTPYIASPVSAYQVQSPSWMQPQPYILQHPGAVLTPSMEHTMSLQPASMISPLAQQMSHLSLGSTGTYMPATSAMQGAYLPQYTHMQTAAVPVEEASGQQQVAVETSNDHSPYTFPPNK</sequence>
<keyword id="KW-0025">Alternative splicing</keyword>
<keyword id="KW-0235">DNA replication</keyword>
<keyword id="KW-0238">DNA-binding</keyword>
<keyword id="KW-0539">Nucleus</keyword>
<keyword id="KW-0597">Phosphoprotein</keyword>
<keyword id="KW-1185">Reference proteome</keyword>
<keyword id="KW-0677">Repeat</keyword>
<keyword id="KW-0694">RNA-binding</keyword>
<gene>
    <name type="primary">Rbms1</name>
    <name type="synonym">Mssp</name>
    <name type="synonym">Mssp1</name>
</gene>
<protein>
    <recommendedName>
        <fullName>RNA-binding motif, single-stranded-interacting protein 1</fullName>
    </recommendedName>
    <alternativeName>
        <fullName>Single-stranded DNA-binding protein MSSP-1</fullName>
    </alternativeName>
</protein>
<feature type="chain" id="PRO_0000081799" description="RNA-binding motif, single-stranded-interacting protein 1">
    <location>
        <begin position="1"/>
        <end position="403"/>
    </location>
</feature>
<feature type="domain" description="RRM 1" evidence="3">
    <location>
        <begin position="62"/>
        <end position="135"/>
    </location>
</feature>
<feature type="domain" description="RRM 2" evidence="3">
    <location>
        <begin position="141"/>
        <end position="226"/>
    </location>
</feature>
<feature type="region of interest" description="Disordered" evidence="4">
    <location>
        <begin position="30"/>
        <end position="56"/>
    </location>
</feature>
<feature type="region of interest" description="Disordered" evidence="4">
    <location>
        <begin position="382"/>
        <end position="403"/>
    </location>
</feature>
<feature type="compositionally biased region" description="Low complexity" evidence="4">
    <location>
        <begin position="40"/>
        <end position="54"/>
    </location>
</feature>
<feature type="compositionally biased region" description="Polar residues" evidence="4">
    <location>
        <begin position="382"/>
        <end position="395"/>
    </location>
</feature>
<feature type="modified residue" description="Phosphothreonine" evidence="2">
    <location>
        <position position="208"/>
    </location>
</feature>
<feature type="splice variant" id="VSP_011931" description="In isoform 2 and isoform 3." evidence="6 7">
    <location>
        <begin position="1"/>
        <end position="33"/>
    </location>
</feature>
<feature type="splice variant" id="VSP_011932" description="In isoform 3." evidence="7">
    <original>V</original>
    <variation>VAKETRENKYRGSAIKV</variation>
    <location>
        <position position="298"/>
    </location>
</feature>
<feature type="sequence conflict" description="In Ref. 2; BAE22471." evidence="8" ref="2">
    <original>E</original>
    <variation>K</variation>
    <location>
        <position position="158"/>
    </location>
</feature>
<accession>Q91W59</accession>
<accession>Q3UI25</accession>
<accession>Q3UXU2</accession>
<accession>Q6PEU6</accession>
<accession>Q6PHC2</accession>
<accession>Q9WTK4</accession>
<dbReference type="EMBL" id="AB026582">
    <property type="protein sequence ID" value="BAA77264.1"/>
    <property type="molecule type" value="Genomic_DNA"/>
</dbReference>
<dbReference type="EMBL" id="AB026569">
    <property type="protein sequence ID" value="BAA77262.1"/>
    <property type="molecule type" value="mRNA"/>
</dbReference>
<dbReference type="EMBL" id="AK135280">
    <property type="protein sequence ID" value="BAE22471.1"/>
    <property type="molecule type" value="mRNA"/>
</dbReference>
<dbReference type="EMBL" id="AK147109">
    <property type="protein sequence ID" value="BAE27681.1"/>
    <property type="molecule type" value="mRNA"/>
</dbReference>
<dbReference type="EMBL" id="AL928581">
    <property type="status" value="NOT_ANNOTATED_CDS"/>
    <property type="molecule type" value="Genomic_DNA"/>
</dbReference>
<dbReference type="EMBL" id="AL929012">
    <property type="status" value="NOT_ANNOTATED_CDS"/>
    <property type="molecule type" value="Genomic_DNA"/>
</dbReference>
<dbReference type="EMBL" id="BC016501">
    <property type="protein sequence ID" value="AAH16501.2"/>
    <property type="status" value="ALT_INIT"/>
    <property type="molecule type" value="mRNA"/>
</dbReference>
<dbReference type="EMBL" id="BC056609">
    <property type="protein sequence ID" value="AAH56609.1"/>
    <property type="molecule type" value="mRNA"/>
</dbReference>
<dbReference type="EMBL" id="BC057866">
    <property type="protein sequence ID" value="AAH57866.1"/>
    <property type="molecule type" value="mRNA"/>
</dbReference>
<dbReference type="CCDS" id="CCDS50591.1">
    <molecule id="Q91W59-1"/>
</dbReference>
<dbReference type="RefSeq" id="NP_001135403.1">
    <property type="nucleotide sequence ID" value="NM_001141931.1"/>
</dbReference>
<dbReference type="RefSeq" id="NP_064692.2">
    <molecule id="Q91W59-1"/>
    <property type="nucleotide sequence ID" value="NM_020296.2"/>
</dbReference>
<dbReference type="SMR" id="Q91W59"/>
<dbReference type="BioGRID" id="208206">
    <property type="interactions" value="3"/>
</dbReference>
<dbReference type="FunCoup" id="Q91W59">
    <property type="interactions" value="2096"/>
</dbReference>
<dbReference type="IntAct" id="Q91W59">
    <property type="interactions" value="1"/>
</dbReference>
<dbReference type="STRING" id="10090.ENSMUSP00000131306"/>
<dbReference type="iPTMnet" id="Q91W59"/>
<dbReference type="PhosphoSitePlus" id="Q91W59"/>
<dbReference type="PaxDb" id="10090-ENSMUSP00000028347"/>
<dbReference type="PeptideAtlas" id="Q91W59"/>
<dbReference type="ProteomicsDB" id="300270">
    <molecule id="Q91W59-1"/>
</dbReference>
<dbReference type="ProteomicsDB" id="300271">
    <molecule id="Q91W59-2"/>
</dbReference>
<dbReference type="ProteomicsDB" id="300272">
    <molecule id="Q91W59-3"/>
</dbReference>
<dbReference type="Pumba" id="Q91W59"/>
<dbReference type="Antibodypedia" id="19068">
    <property type="antibodies" value="299 antibodies from 28 providers"/>
</dbReference>
<dbReference type="DNASU" id="56878"/>
<dbReference type="Ensembl" id="ENSMUST00000028347.13">
    <molecule id="Q91W59-1"/>
    <property type="protein sequence ID" value="ENSMUSP00000028347.7"/>
    <property type="gene ID" value="ENSMUSG00000026970.17"/>
</dbReference>
<dbReference type="Ensembl" id="ENSMUST00000112509.2">
    <molecule id="Q91W59-3"/>
    <property type="protein sequence ID" value="ENSMUSP00000108128.2"/>
    <property type="gene ID" value="ENSMUSG00000026970.17"/>
</dbReference>
<dbReference type="GeneID" id="56878"/>
<dbReference type="KEGG" id="mmu:56878"/>
<dbReference type="UCSC" id="uc008juq.2">
    <molecule id="Q91W59-1"/>
    <property type="organism name" value="mouse"/>
</dbReference>
<dbReference type="AGR" id="MGI:1861774"/>
<dbReference type="CTD" id="5937"/>
<dbReference type="MGI" id="MGI:1861774">
    <property type="gene designation" value="Rbms1"/>
</dbReference>
<dbReference type="VEuPathDB" id="HostDB:ENSMUSG00000026970"/>
<dbReference type="eggNOG" id="KOG4733">
    <property type="taxonomic scope" value="Eukaryota"/>
</dbReference>
<dbReference type="GeneTree" id="ENSGT00940000156082"/>
<dbReference type="HOGENOM" id="CLU_016278_2_0_1"/>
<dbReference type="InParanoid" id="Q91W59"/>
<dbReference type="OMA" id="TMEHTMS"/>
<dbReference type="OrthoDB" id="271725at2759"/>
<dbReference type="PhylomeDB" id="Q91W59"/>
<dbReference type="TreeFam" id="TF314644"/>
<dbReference type="BioGRID-ORCS" id="56878">
    <property type="hits" value="4 hits in 78 CRISPR screens"/>
</dbReference>
<dbReference type="ChiTaRS" id="Rbms1">
    <property type="organism name" value="mouse"/>
</dbReference>
<dbReference type="PRO" id="PR:Q91W59"/>
<dbReference type="Proteomes" id="UP000000589">
    <property type="component" value="Chromosome 2"/>
</dbReference>
<dbReference type="RNAct" id="Q91W59">
    <property type="molecule type" value="protein"/>
</dbReference>
<dbReference type="Bgee" id="ENSMUSG00000026970">
    <property type="expression patterns" value="Expressed in placenta labyrinth and 261 other cell types or tissues"/>
</dbReference>
<dbReference type="ExpressionAtlas" id="Q91W59">
    <property type="expression patterns" value="baseline and differential"/>
</dbReference>
<dbReference type="GO" id="GO:0005829">
    <property type="term" value="C:cytosol"/>
    <property type="evidence" value="ECO:0007669"/>
    <property type="project" value="Ensembl"/>
</dbReference>
<dbReference type="GO" id="GO:0005634">
    <property type="term" value="C:nucleus"/>
    <property type="evidence" value="ECO:0007669"/>
    <property type="project" value="UniProtKB-SubCell"/>
</dbReference>
<dbReference type="GO" id="GO:1990904">
    <property type="term" value="C:ribonucleoprotein complex"/>
    <property type="evidence" value="ECO:0007669"/>
    <property type="project" value="InterPro"/>
</dbReference>
<dbReference type="GO" id="GO:0003677">
    <property type="term" value="F:DNA binding"/>
    <property type="evidence" value="ECO:0007669"/>
    <property type="project" value="UniProtKB-KW"/>
</dbReference>
<dbReference type="GO" id="GO:0003723">
    <property type="term" value="F:RNA binding"/>
    <property type="evidence" value="ECO:0007669"/>
    <property type="project" value="UniProtKB-KW"/>
</dbReference>
<dbReference type="GO" id="GO:0006260">
    <property type="term" value="P:DNA replication"/>
    <property type="evidence" value="ECO:0007669"/>
    <property type="project" value="UniProtKB-KW"/>
</dbReference>
<dbReference type="CDD" id="cd12470">
    <property type="entry name" value="RRM1_MSSP1"/>
    <property type="match status" value="1"/>
</dbReference>
<dbReference type="CDD" id="cd12473">
    <property type="entry name" value="RRM2_MSSP1"/>
    <property type="match status" value="1"/>
</dbReference>
<dbReference type="FunFam" id="3.30.70.330:FF:000012">
    <property type="entry name" value="RNA-binding motif, single-stranded-interacting protein 3 isoform 1"/>
    <property type="match status" value="1"/>
</dbReference>
<dbReference type="FunFam" id="3.30.70.330:FF:000014">
    <property type="entry name" value="RNA-binding motif, single-stranded-interacting protein 3 isoform 1"/>
    <property type="match status" value="1"/>
</dbReference>
<dbReference type="Gene3D" id="3.30.70.330">
    <property type="match status" value="2"/>
</dbReference>
<dbReference type="InterPro" id="IPR002343">
    <property type="entry name" value="Hud_Sxl_RNA"/>
</dbReference>
<dbReference type="InterPro" id="IPR034404">
    <property type="entry name" value="MSSP1_RRM1"/>
</dbReference>
<dbReference type="InterPro" id="IPR012677">
    <property type="entry name" value="Nucleotide-bd_a/b_plait_sf"/>
</dbReference>
<dbReference type="InterPro" id="IPR035979">
    <property type="entry name" value="RBD_domain_sf"/>
</dbReference>
<dbReference type="InterPro" id="IPR000504">
    <property type="entry name" value="RRM_dom"/>
</dbReference>
<dbReference type="PANTHER" id="PTHR24012">
    <property type="entry name" value="RNA BINDING PROTEIN"/>
    <property type="match status" value="1"/>
</dbReference>
<dbReference type="Pfam" id="PF00076">
    <property type="entry name" value="RRM_1"/>
    <property type="match status" value="2"/>
</dbReference>
<dbReference type="PRINTS" id="PR00961">
    <property type="entry name" value="HUDSXLRNA"/>
</dbReference>
<dbReference type="SMART" id="SM00360">
    <property type="entry name" value="RRM"/>
    <property type="match status" value="2"/>
</dbReference>
<dbReference type="SUPFAM" id="SSF54928">
    <property type="entry name" value="RNA-binding domain, RBD"/>
    <property type="match status" value="2"/>
</dbReference>
<dbReference type="PROSITE" id="PS50102">
    <property type="entry name" value="RRM"/>
    <property type="match status" value="2"/>
</dbReference>
<reference key="1">
    <citation type="journal article" date="2000" name="Int. J. Oncol.">
        <title>Structure and comparison of genomic and complementary DNAs of mouse MSSP, a c-Myc binding protein.</title>
        <authorList>
            <person name="Fujimoto M."/>
            <person name="Matsumoto K."/>
            <person name="Iguchi-Ariga S.M.M."/>
            <person name="Ariga H."/>
        </authorList>
    </citation>
    <scope>NUCLEOTIDE SEQUENCE [GENOMIC DNA / MRNA] (ISOFORM 2)</scope>
    <scope>TISSUE SPECIFICITY</scope>
    <source>
        <tissue>Brain</tissue>
    </source>
</reference>
<reference key="2">
    <citation type="journal article" date="2005" name="Science">
        <title>The transcriptional landscape of the mammalian genome.</title>
        <authorList>
            <person name="Carninci P."/>
            <person name="Kasukawa T."/>
            <person name="Katayama S."/>
            <person name="Gough J."/>
            <person name="Frith M.C."/>
            <person name="Maeda N."/>
            <person name="Oyama R."/>
            <person name="Ravasi T."/>
            <person name="Lenhard B."/>
            <person name="Wells C."/>
            <person name="Kodzius R."/>
            <person name="Shimokawa K."/>
            <person name="Bajic V.B."/>
            <person name="Brenner S.E."/>
            <person name="Batalov S."/>
            <person name="Forrest A.R."/>
            <person name="Zavolan M."/>
            <person name="Davis M.J."/>
            <person name="Wilming L.G."/>
            <person name="Aidinis V."/>
            <person name="Allen J.E."/>
            <person name="Ambesi-Impiombato A."/>
            <person name="Apweiler R."/>
            <person name="Aturaliya R.N."/>
            <person name="Bailey T.L."/>
            <person name="Bansal M."/>
            <person name="Baxter L."/>
            <person name="Beisel K.W."/>
            <person name="Bersano T."/>
            <person name="Bono H."/>
            <person name="Chalk A.M."/>
            <person name="Chiu K.P."/>
            <person name="Choudhary V."/>
            <person name="Christoffels A."/>
            <person name="Clutterbuck D.R."/>
            <person name="Crowe M.L."/>
            <person name="Dalla E."/>
            <person name="Dalrymple B.P."/>
            <person name="de Bono B."/>
            <person name="Della Gatta G."/>
            <person name="di Bernardo D."/>
            <person name="Down T."/>
            <person name="Engstrom P."/>
            <person name="Fagiolini M."/>
            <person name="Faulkner G."/>
            <person name="Fletcher C.F."/>
            <person name="Fukushima T."/>
            <person name="Furuno M."/>
            <person name="Futaki S."/>
            <person name="Gariboldi M."/>
            <person name="Georgii-Hemming P."/>
            <person name="Gingeras T.R."/>
            <person name="Gojobori T."/>
            <person name="Green R.E."/>
            <person name="Gustincich S."/>
            <person name="Harbers M."/>
            <person name="Hayashi Y."/>
            <person name="Hensch T.K."/>
            <person name="Hirokawa N."/>
            <person name="Hill D."/>
            <person name="Huminiecki L."/>
            <person name="Iacono M."/>
            <person name="Ikeo K."/>
            <person name="Iwama A."/>
            <person name="Ishikawa T."/>
            <person name="Jakt M."/>
            <person name="Kanapin A."/>
            <person name="Katoh M."/>
            <person name="Kawasawa Y."/>
            <person name="Kelso J."/>
            <person name="Kitamura H."/>
            <person name="Kitano H."/>
            <person name="Kollias G."/>
            <person name="Krishnan S.P."/>
            <person name="Kruger A."/>
            <person name="Kummerfeld S.K."/>
            <person name="Kurochkin I.V."/>
            <person name="Lareau L.F."/>
            <person name="Lazarevic D."/>
            <person name="Lipovich L."/>
            <person name="Liu J."/>
            <person name="Liuni S."/>
            <person name="McWilliam S."/>
            <person name="Madan Babu M."/>
            <person name="Madera M."/>
            <person name="Marchionni L."/>
            <person name="Matsuda H."/>
            <person name="Matsuzawa S."/>
            <person name="Miki H."/>
            <person name="Mignone F."/>
            <person name="Miyake S."/>
            <person name="Morris K."/>
            <person name="Mottagui-Tabar S."/>
            <person name="Mulder N."/>
            <person name="Nakano N."/>
            <person name="Nakauchi H."/>
            <person name="Ng P."/>
            <person name="Nilsson R."/>
            <person name="Nishiguchi S."/>
            <person name="Nishikawa S."/>
            <person name="Nori F."/>
            <person name="Ohara O."/>
            <person name="Okazaki Y."/>
            <person name="Orlando V."/>
            <person name="Pang K.C."/>
            <person name="Pavan W.J."/>
            <person name="Pavesi G."/>
            <person name="Pesole G."/>
            <person name="Petrovsky N."/>
            <person name="Piazza S."/>
            <person name="Reed J."/>
            <person name="Reid J.F."/>
            <person name="Ring B.Z."/>
            <person name="Ringwald M."/>
            <person name="Rost B."/>
            <person name="Ruan Y."/>
            <person name="Salzberg S.L."/>
            <person name="Sandelin A."/>
            <person name="Schneider C."/>
            <person name="Schoenbach C."/>
            <person name="Sekiguchi K."/>
            <person name="Semple C.A."/>
            <person name="Seno S."/>
            <person name="Sessa L."/>
            <person name="Sheng Y."/>
            <person name="Shibata Y."/>
            <person name="Shimada H."/>
            <person name="Shimada K."/>
            <person name="Silva D."/>
            <person name="Sinclair B."/>
            <person name="Sperling S."/>
            <person name="Stupka E."/>
            <person name="Sugiura K."/>
            <person name="Sultana R."/>
            <person name="Takenaka Y."/>
            <person name="Taki K."/>
            <person name="Tammoja K."/>
            <person name="Tan S.L."/>
            <person name="Tang S."/>
            <person name="Taylor M.S."/>
            <person name="Tegner J."/>
            <person name="Teichmann S.A."/>
            <person name="Ueda H.R."/>
            <person name="van Nimwegen E."/>
            <person name="Verardo R."/>
            <person name="Wei C.L."/>
            <person name="Yagi K."/>
            <person name="Yamanishi H."/>
            <person name="Zabarovsky E."/>
            <person name="Zhu S."/>
            <person name="Zimmer A."/>
            <person name="Hide W."/>
            <person name="Bult C."/>
            <person name="Grimmond S.M."/>
            <person name="Teasdale R.D."/>
            <person name="Liu E.T."/>
            <person name="Brusic V."/>
            <person name="Quackenbush J."/>
            <person name="Wahlestedt C."/>
            <person name="Mattick J.S."/>
            <person name="Hume D.A."/>
            <person name="Kai C."/>
            <person name="Sasaki D."/>
            <person name="Tomaru Y."/>
            <person name="Fukuda S."/>
            <person name="Kanamori-Katayama M."/>
            <person name="Suzuki M."/>
            <person name="Aoki J."/>
            <person name="Arakawa T."/>
            <person name="Iida J."/>
            <person name="Imamura K."/>
            <person name="Itoh M."/>
            <person name="Kato T."/>
            <person name="Kawaji H."/>
            <person name="Kawagashira N."/>
            <person name="Kawashima T."/>
            <person name="Kojima M."/>
            <person name="Kondo S."/>
            <person name="Konno H."/>
            <person name="Nakano K."/>
            <person name="Ninomiya N."/>
            <person name="Nishio T."/>
            <person name="Okada M."/>
            <person name="Plessy C."/>
            <person name="Shibata K."/>
            <person name="Shiraki T."/>
            <person name="Suzuki S."/>
            <person name="Tagami M."/>
            <person name="Waki K."/>
            <person name="Watahiki A."/>
            <person name="Okamura-Oho Y."/>
            <person name="Suzuki H."/>
            <person name="Kawai J."/>
            <person name="Hayashizaki Y."/>
        </authorList>
    </citation>
    <scope>NUCLEOTIDE SEQUENCE [LARGE SCALE MRNA] (ISOFORM 1)</scope>
    <source>
        <strain>C57BL/6J</strain>
        <tissue>Heart</tissue>
        <tissue>Wolffian duct</tissue>
    </source>
</reference>
<reference key="3">
    <citation type="journal article" date="2009" name="PLoS Biol.">
        <title>Lineage-specific biology revealed by a finished genome assembly of the mouse.</title>
        <authorList>
            <person name="Church D.M."/>
            <person name="Goodstadt L."/>
            <person name="Hillier L.W."/>
            <person name="Zody M.C."/>
            <person name="Goldstein S."/>
            <person name="She X."/>
            <person name="Bult C.J."/>
            <person name="Agarwala R."/>
            <person name="Cherry J.L."/>
            <person name="DiCuccio M."/>
            <person name="Hlavina W."/>
            <person name="Kapustin Y."/>
            <person name="Meric P."/>
            <person name="Maglott D."/>
            <person name="Birtle Z."/>
            <person name="Marques A.C."/>
            <person name="Graves T."/>
            <person name="Zhou S."/>
            <person name="Teague B."/>
            <person name="Potamousis K."/>
            <person name="Churas C."/>
            <person name="Place M."/>
            <person name="Herschleb J."/>
            <person name="Runnheim R."/>
            <person name="Forrest D."/>
            <person name="Amos-Landgraf J."/>
            <person name="Schwartz D.C."/>
            <person name="Cheng Z."/>
            <person name="Lindblad-Toh K."/>
            <person name="Eichler E.E."/>
            <person name="Ponting C.P."/>
        </authorList>
    </citation>
    <scope>NUCLEOTIDE SEQUENCE [LARGE SCALE GENOMIC DNA]</scope>
    <source>
        <strain>C57BL/6J</strain>
    </source>
</reference>
<reference key="4">
    <citation type="journal article" date="2004" name="Genome Res.">
        <title>The status, quality, and expansion of the NIH full-length cDNA project: the Mammalian Gene Collection (MGC).</title>
        <authorList>
            <consortium name="The MGC Project Team"/>
        </authorList>
    </citation>
    <scope>NUCLEOTIDE SEQUENCE [LARGE SCALE MRNA] (ISOFORMS 1 AND 3)</scope>
    <source>
        <strain>C57BL/6J</strain>
        <strain>FVB/N</strain>
        <strain>NMRI</strain>
        <tissue>Mammary gland</tissue>
        <tissue>Retina</tissue>
    </source>
</reference>
<reference key="5">
    <citation type="journal article" date="2010" name="Cell">
        <title>A tissue-specific atlas of mouse protein phosphorylation and expression.</title>
        <authorList>
            <person name="Huttlin E.L."/>
            <person name="Jedrychowski M.P."/>
            <person name="Elias J.E."/>
            <person name="Goswami T."/>
            <person name="Rad R."/>
            <person name="Beausoleil S.A."/>
            <person name="Villen J."/>
            <person name="Haas W."/>
            <person name="Sowa M.E."/>
            <person name="Gygi S.P."/>
        </authorList>
    </citation>
    <scope>IDENTIFICATION BY MASS SPECTROMETRY [LARGE SCALE ANALYSIS]</scope>
    <source>
        <tissue>Lung</tissue>
    </source>
</reference>
<proteinExistence type="evidence at protein level"/>
<organism>
    <name type="scientific">Mus musculus</name>
    <name type="common">Mouse</name>
    <dbReference type="NCBI Taxonomy" id="10090"/>
    <lineage>
        <taxon>Eukaryota</taxon>
        <taxon>Metazoa</taxon>
        <taxon>Chordata</taxon>
        <taxon>Craniata</taxon>
        <taxon>Vertebrata</taxon>
        <taxon>Euteleostomi</taxon>
        <taxon>Mammalia</taxon>
        <taxon>Eutheria</taxon>
        <taxon>Euarchontoglires</taxon>
        <taxon>Glires</taxon>
        <taxon>Rodentia</taxon>
        <taxon>Myomorpha</taxon>
        <taxon>Muroidea</taxon>
        <taxon>Muridae</taxon>
        <taxon>Murinae</taxon>
        <taxon>Mus</taxon>
        <taxon>Mus</taxon>
    </lineage>
</organism>
<name>RBMS1_MOUSE</name>
<comment type="function">
    <text>Single-stranded DNA binding protein that interacts with the region upstream of the MYC gene. Binds specifically to the DNA sequence motif 5'-[AT]CT[AT][AT]T-3'. Probably has a role in DNA replication.</text>
</comment>
<comment type="subcellular location">
    <subcellularLocation>
        <location evidence="1">Nucleus</location>
    </subcellularLocation>
</comment>
<comment type="alternative products">
    <event type="alternative splicing"/>
    <isoform>
        <id>Q91W59-1</id>
        <name>1</name>
        <sequence type="displayed"/>
    </isoform>
    <isoform>
        <id>Q91W59-2</id>
        <name>2</name>
        <sequence type="described" ref="VSP_011931"/>
    </isoform>
    <isoform>
        <id>Q91W59-3</id>
        <name>3</name>
        <sequence type="described" ref="VSP_011931 VSP_011932"/>
    </isoform>
</comment>
<comment type="tissue specificity">
    <text evidence="5">Ubiquitous. Expressed in all tissues except testis.</text>
</comment>
<comment type="sequence caution" evidence="8">
    <conflict type="erroneous initiation">
        <sequence resource="EMBL-CDS" id="AAH16501"/>
    </conflict>
</comment>